<keyword id="KW-0238">DNA-binding</keyword>
<keyword id="KW-0479">Metal-binding</keyword>
<keyword id="KW-0539">Nucleus</keyword>
<keyword id="KW-1267">Proteomics identification</keyword>
<keyword id="KW-1185">Reference proteome</keyword>
<keyword id="KW-0677">Repeat</keyword>
<keyword id="KW-0804">Transcription</keyword>
<keyword id="KW-0805">Transcription regulation</keyword>
<keyword id="KW-0862">Zinc</keyword>
<keyword id="KW-0863">Zinc-finger</keyword>
<accession>Q9HCL3</accession>
<accession>A7MD23</accession>
<sequence>MAHGSVTFRDVAIDFSQEEWEFLDPAQRDLYRDVMWENYSNFISLGPSISKPDVITLLDEERKEPGMVVREGTRRYCPDLESRYRTNTLSPEKDIYEIYSFQWDIMERIKSYSLQGSIFRNDWECKSKIEGEKEQQEGYFGQVKITSEKMTTYKRHNFLTEYQIVHNGEKVYECKECRKTFIRRSTLSQHLRIHTGEKPYKCKECGQAFRQRAHLIRHHKLHTGEKPYECKECGKAFTVLQELTQHQRLHTGEKPYECKECGKAFRVHQQLARHQRIHTGEKPYECKDCGKTFRQCTHLTRHQRLHTAEKLYECKECGKAFVCGPDLRVHQKIHFGEKPYECKECGKAFRICQQLTVHQSIHTGEKPYECKECGKTFRLRQQLVRHQRIHTREKPYECMECWKTFSSYSQLISHQSIHIGERPYECEECGKAFRLLSQLTQHQSIHTGEKPYECKECRKPFRLLSQLTQHQSIHTGEKPYECKECGKAFRLYSFLTQHQRIHTGEKPYKCKECKKAFRQHSHLTQHQKIHNGI</sequence>
<dbReference type="EMBL" id="AB046779">
    <property type="protein sequence ID" value="BAB13385.1"/>
    <property type="status" value="ALT_INIT"/>
    <property type="molecule type" value="mRNA"/>
</dbReference>
<dbReference type="EMBL" id="BC152446">
    <property type="protein sequence ID" value="AAI52447.1"/>
    <property type="molecule type" value="mRNA"/>
</dbReference>
<dbReference type="CCDS" id="CCDS33002.1"/>
<dbReference type="RefSeq" id="NP_065968.1">
    <property type="nucleotide sequence ID" value="NM_020917.3"/>
</dbReference>
<dbReference type="RefSeq" id="XP_016882527.1">
    <property type="nucleotide sequence ID" value="XM_017027038.1"/>
</dbReference>
<dbReference type="SMR" id="Q9HCL3"/>
<dbReference type="BioGRID" id="121706">
    <property type="interactions" value="8"/>
</dbReference>
<dbReference type="FunCoup" id="Q9HCL3">
    <property type="interactions" value="164"/>
</dbReference>
<dbReference type="IntAct" id="Q9HCL3">
    <property type="interactions" value="22"/>
</dbReference>
<dbReference type="MINT" id="Q9HCL3"/>
<dbReference type="STRING" id="9606.ENSP00000270001"/>
<dbReference type="iPTMnet" id="Q9HCL3"/>
<dbReference type="PhosphoSitePlus" id="Q9HCL3"/>
<dbReference type="BioMuta" id="ZFP14"/>
<dbReference type="DMDM" id="20140808"/>
<dbReference type="jPOST" id="Q9HCL3"/>
<dbReference type="MassIVE" id="Q9HCL3"/>
<dbReference type="PaxDb" id="9606-ENSP00000270001"/>
<dbReference type="PeptideAtlas" id="Q9HCL3"/>
<dbReference type="ProteomicsDB" id="81753"/>
<dbReference type="Pumba" id="Q9HCL3"/>
<dbReference type="Antibodypedia" id="29750">
    <property type="antibodies" value="84 antibodies from 16 providers"/>
</dbReference>
<dbReference type="DNASU" id="57677"/>
<dbReference type="Ensembl" id="ENST00000270001.12">
    <property type="protein sequence ID" value="ENSP00000270001.6"/>
    <property type="gene ID" value="ENSG00000142065.14"/>
</dbReference>
<dbReference type="GeneID" id="57677"/>
<dbReference type="KEGG" id="hsa:57677"/>
<dbReference type="MANE-Select" id="ENST00000270001.12">
    <property type="protein sequence ID" value="ENSP00000270001.6"/>
    <property type="RefSeq nucleotide sequence ID" value="NM_020917.3"/>
    <property type="RefSeq protein sequence ID" value="NP_065968.1"/>
</dbReference>
<dbReference type="UCSC" id="uc010eex.3">
    <property type="organism name" value="human"/>
</dbReference>
<dbReference type="AGR" id="HGNC:29312"/>
<dbReference type="CTD" id="57677"/>
<dbReference type="GeneCards" id="ZFP14"/>
<dbReference type="HGNC" id="HGNC:29312">
    <property type="gene designation" value="ZFP14"/>
</dbReference>
<dbReference type="HPA" id="ENSG00000142065">
    <property type="expression patterns" value="Low tissue specificity"/>
</dbReference>
<dbReference type="MIM" id="620163">
    <property type="type" value="gene"/>
</dbReference>
<dbReference type="neXtProt" id="NX_Q9HCL3"/>
<dbReference type="OpenTargets" id="ENSG00000142065"/>
<dbReference type="PharmGKB" id="PA145147576"/>
<dbReference type="VEuPathDB" id="HostDB:ENSG00000142065"/>
<dbReference type="eggNOG" id="KOG1721">
    <property type="taxonomic scope" value="Eukaryota"/>
</dbReference>
<dbReference type="GeneTree" id="ENSGT00940000162016"/>
<dbReference type="HOGENOM" id="CLU_002678_44_0_1"/>
<dbReference type="InParanoid" id="Q9HCL3"/>
<dbReference type="OMA" id="YECVECW"/>
<dbReference type="OrthoDB" id="6591996at2759"/>
<dbReference type="PAN-GO" id="Q9HCL3">
    <property type="GO annotations" value="4 GO annotations based on evolutionary models"/>
</dbReference>
<dbReference type="PhylomeDB" id="Q9HCL3"/>
<dbReference type="TreeFam" id="TF341817"/>
<dbReference type="PathwayCommons" id="Q9HCL3"/>
<dbReference type="Reactome" id="R-HSA-212436">
    <property type="pathway name" value="Generic Transcription Pathway"/>
</dbReference>
<dbReference type="SignaLink" id="Q9HCL3"/>
<dbReference type="BioGRID-ORCS" id="57677">
    <property type="hits" value="27 hits in 1170 CRISPR screens"/>
</dbReference>
<dbReference type="ChiTaRS" id="ZFP14">
    <property type="organism name" value="human"/>
</dbReference>
<dbReference type="GenomeRNAi" id="57677"/>
<dbReference type="Pharos" id="Q9HCL3">
    <property type="development level" value="Tdark"/>
</dbReference>
<dbReference type="PRO" id="PR:Q9HCL3"/>
<dbReference type="Proteomes" id="UP000005640">
    <property type="component" value="Chromosome 19"/>
</dbReference>
<dbReference type="RNAct" id="Q9HCL3">
    <property type="molecule type" value="protein"/>
</dbReference>
<dbReference type="Bgee" id="ENSG00000142065">
    <property type="expression patterns" value="Expressed in cortical plate and 145 other cell types or tissues"/>
</dbReference>
<dbReference type="ExpressionAtlas" id="Q9HCL3">
    <property type="expression patterns" value="baseline and differential"/>
</dbReference>
<dbReference type="GO" id="GO:0005634">
    <property type="term" value="C:nucleus"/>
    <property type="evidence" value="ECO:0000318"/>
    <property type="project" value="GO_Central"/>
</dbReference>
<dbReference type="GO" id="GO:0000981">
    <property type="term" value="F:DNA-binding transcription factor activity, RNA polymerase II-specific"/>
    <property type="evidence" value="ECO:0000318"/>
    <property type="project" value="GO_Central"/>
</dbReference>
<dbReference type="GO" id="GO:0000978">
    <property type="term" value="F:RNA polymerase II cis-regulatory region sequence-specific DNA binding"/>
    <property type="evidence" value="ECO:0000318"/>
    <property type="project" value="GO_Central"/>
</dbReference>
<dbReference type="GO" id="GO:0008270">
    <property type="term" value="F:zinc ion binding"/>
    <property type="evidence" value="ECO:0007669"/>
    <property type="project" value="UniProtKB-KW"/>
</dbReference>
<dbReference type="GO" id="GO:0001835">
    <property type="term" value="P:blastocyst hatching"/>
    <property type="evidence" value="ECO:0007669"/>
    <property type="project" value="Ensembl"/>
</dbReference>
<dbReference type="GO" id="GO:0006357">
    <property type="term" value="P:regulation of transcription by RNA polymerase II"/>
    <property type="evidence" value="ECO:0000318"/>
    <property type="project" value="GO_Central"/>
</dbReference>
<dbReference type="CDD" id="cd07765">
    <property type="entry name" value="KRAB_A-box"/>
    <property type="match status" value="1"/>
</dbReference>
<dbReference type="FunFam" id="3.30.160.60:FF:000020">
    <property type="entry name" value="Zinc finger protein 14 homolog"/>
    <property type="match status" value="4"/>
</dbReference>
<dbReference type="FunFam" id="3.30.160.60:FF:000473">
    <property type="entry name" value="zinc finger protein 14 homolog isoform X1"/>
    <property type="match status" value="1"/>
</dbReference>
<dbReference type="FunFam" id="3.30.160.60:FF:000561">
    <property type="entry name" value="Zinc finger protein 30 homolog"/>
    <property type="match status" value="1"/>
</dbReference>
<dbReference type="FunFam" id="3.30.160.60:FF:000434">
    <property type="entry name" value="zinc finger protein 30 homolog"/>
    <property type="match status" value="1"/>
</dbReference>
<dbReference type="FunFam" id="3.30.160.60:FF:002254">
    <property type="entry name" value="Zinc finger protein 540"/>
    <property type="match status" value="2"/>
</dbReference>
<dbReference type="FunFam" id="3.30.160.60:FF:000737">
    <property type="entry name" value="Zinc finger protein 565"/>
    <property type="match status" value="1"/>
</dbReference>
<dbReference type="FunFam" id="3.30.160.60:FF:001270">
    <property type="entry name" value="zinc finger protein 583 isoform X1"/>
    <property type="match status" value="1"/>
</dbReference>
<dbReference type="FunFam" id="3.30.160.60:FF:001014">
    <property type="entry name" value="Zinc finger protein 597"/>
    <property type="match status" value="1"/>
</dbReference>
<dbReference type="FunFam" id="3.30.160.60:FF:000416">
    <property type="entry name" value="zinc finger protein 879 isoform X1"/>
    <property type="match status" value="1"/>
</dbReference>
<dbReference type="Gene3D" id="6.10.140.140">
    <property type="match status" value="1"/>
</dbReference>
<dbReference type="Gene3D" id="3.30.160.60">
    <property type="entry name" value="Classic Zinc Finger"/>
    <property type="match status" value="13"/>
</dbReference>
<dbReference type="InterPro" id="IPR001909">
    <property type="entry name" value="KRAB"/>
</dbReference>
<dbReference type="InterPro" id="IPR036051">
    <property type="entry name" value="KRAB_dom_sf"/>
</dbReference>
<dbReference type="InterPro" id="IPR050758">
    <property type="entry name" value="Znf_C2H2-type"/>
</dbReference>
<dbReference type="InterPro" id="IPR036236">
    <property type="entry name" value="Znf_C2H2_sf"/>
</dbReference>
<dbReference type="InterPro" id="IPR013087">
    <property type="entry name" value="Znf_C2H2_type"/>
</dbReference>
<dbReference type="PANTHER" id="PTHR23234:SF8">
    <property type="entry name" value="C2H2-TYPE DOMAIN-CONTAINING PROTEIN"/>
    <property type="match status" value="1"/>
</dbReference>
<dbReference type="PANTHER" id="PTHR23234">
    <property type="entry name" value="ZNF44 PROTEIN"/>
    <property type="match status" value="1"/>
</dbReference>
<dbReference type="Pfam" id="PF01352">
    <property type="entry name" value="KRAB"/>
    <property type="match status" value="1"/>
</dbReference>
<dbReference type="Pfam" id="PF00096">
    <property type="entry name" value="zf-C2H2"/>
    <property type="match status" value="12"/>
</dbReference>
<dbReference type="Pfam" id="PF13912">
    <property type="entry name" value="zf-C2H2_6"/>
    <property type="match status" value="1"/>
</dbReference>
<dbReference type="SMART" id="SM00349">
    <property type="entry name" value="KRAB"/>
    <property type="match status" value="1"/>
</dbReference>
<dbReference type="SMART" id="SM00355">
    <property type="entry name" value="ZnF_C2H2"/>
    <property type="match status" value="13"/>
</dbReference>
<dbReference type="SUPFAM" id="SSF57667">
    <property type="entry name" value="beta-beta-alpha zinc fingers"/>
    <property type="match status" value="7"/>
</dbReference>
<dbReference type="SUPFAM" id="SSF109640">
    <property type="entry name" value="KRAB domain (Kruppel-associated box)"/>
    <property type="match status" value="1"/>
</dbReference>
<dbReference type="PROSITE" id="PS50805">
    <property type="entry name" value="KRAB"/>
    <property type="match status" value="1"/>
</dbReference>
<dbReference type="PROSITE" id="PS00028">
    <property type="entry name" value="ZINC_FINGER_C2H2_1"/>
    <property type="match status" value="13"/>
</dbReference>
<dbReference type="PROSITE" id="PS50157">
    <property type="entry name" value="ZINC_FINGER_C2H2_2"/>
    <property type="match status" value="13"/>
</dbReference>
<organism>
    <name type="scientific">Homo sapiens</name>
    <name type="common">Human</name>
    <dbReference type="NCBI Taxonomy" id="9606"/>
    <lineage>
        <taxon>Eukaryota</taxon>
        <taxon>Metazoa</taxon>
        <taxon>Chordata</taxon>
        <taxon>Craniata</taxon>
        <taxon>Vertebrata</taxon>
        <taxon>Euteleostomi</taxon>
        <taxon>Mammalia</taxon>
        <taxon>Eutheria</taxon>
        <taxon>Euarchontoglires</taxon>
        <taxon>Primates</taxon>
        <taxon>Haplorrhini</taxon>
        <taxon>Catarrhini</taxon>
        <taxon>Hominidae</taxon>
        <taxon>Homo</taxon>
    </lineage>
</organism>
<evidence type="ECO:0000255" key="1">
    <source>
        <dbReference type="PROSITE-ProRule" id="PRU00042"/>
    </source>
</evidence>
<evidence type="ECO:0000255" key="2">
    <source>
        <dbReference type="PROSITE-ProRule" id="PRU00119"/>
    </source>
</evidence>
<evidence type="ECO:0000305" key="3"/>
<feature type="chain" id="PRO_0000047285" description="Zinc finger protein 14 homolog">
    <location>
        <begin position="1"/>
        <end position="533"/>
    </location>
</feature>
<feature type="domain" description="KRAB" evidence="2">
    <location>
        <begin position="6"/>
        <end position="78"/>
    </location>
</feature>
<feature type="zinc finger region" description="C2H2-type 1" evidence="1">
    <location>
        <begin position="172"/>
        <end position="194"/>
    </location>
</feature>
<feature type="zinc finger region" description="C2H2-type 2" evidence="1">
    <location>
        <begin position="200"/>
        <end position="222"/>
    </location>
</feature>
<feature type="zinc finger region" description="C2H2-type 3" evidence="1">
    <location>
        <begin position="228"/>
        <end position="250"/>
    </location>
</feature>
<feature type="zinc finger region" description="C2H2-type 4" evidence="1">
    <location>
        <begin position="256"/>
        <end position="278"/>
    </location>
</feature>
<feature type="zinc finger region" description="C2H2-type 5" evidence="1">
    <location>
        <begin position="284"/>
        <end position="306"/>
    </location>
</feature>
<feature type="zinc finger region" description="C2H2-type 6" evidence="1">
    <location>
        <begin position="312"/>
        <end position="334"/>
    </location>
</feature>
<feature type="zinc finger region" description="C2H2-type 7" evidence="1">
    <location>
        <begin position="340"/>
        <end position="362"/>
    </location>
</feature>
<feature type="zinc finger region" description="C2H2-type 8" evidence="1">
    <location>
        <begin position="368"/>
        <end position="390"/>
    </location>
</feature>
<feature type="zinc finger region" description="C2H2-type 9" evidence="1">
    <location>
        <begin position="396"/>
        <end position="418"/>
    </location>
</feature>
<feature type="zinc finger region" description="C2H2-type 10" evidence="1">
    <location>
        <begin position="424"/>
        <end position="446"/>
    </location>
</feature>
<feature type="zinc finger region" description="C2H2-type 11" evidence="1">
    <location>
        <begin position="452"/>
        <end position="474"/>
    </location>
</feature>
<feature type="zinc finger region" description="C2H2-type 12" evidence="1">
    <location>
        <begin position="480"/>
        <end position="502"/>
    </location>
</feature>
<feature type="zinc finger region" description="C2H2-type 13" evidence="1">
    <location>
        <begin position="508"/>
        <end position="530"/>
    </location>
</feature>
<reference key="1">
    <citation type="journal article" date="2000" name="DNA Res.">
        <title>Prediction of the coding sequences of unidentified human genes. XVIII. The complete sequences of 100 new cDNA clones from brain which code for large proteins in vitro.</title>
        <authorList>
            <person name="Nagase T."/>
            <person name="Kikuno R."/>
            <person name="Nakayama M."/>
            <person name="Hirosawa M."/>
            <person name="Ohara O."/>
        </authorList>
    </citation>
    <scope>NUCLEOTIDE SEQUENCE [LARGE SCALE MRNA]</scope>
    <source>
        <tissue>Brain</tissue>
    </source>
</reference>
<reference key="2">
    <citation type="journal article" date="2004" name="Genome Res.">
        <title>The status, quality, and expansion of the NIH full-length cDNA project: the Mammalian Gene Collection (MGC).</title>
        <authorList>
            <consortium name="The MGC Project Team"/>
        </authorList>
    </citation>
    <scope>NUCLEOTIDE SEQUENCE [LARGE SCALE MRNA]</scope>
</reference>
<comment type="function">
    <text>May be involved in transcriptional regulation.</text>
</comment>
<comment type="interaction">
    <interactant intactId="EBI-6381556">
        <id>Q9HCL3</id>
    </interactant>
    <interactant intactId="EBI-746778">
        <id>Q96A72</id>
        <label>MAGOHB</label>
    </interactant>
    <organismsDiffer>false</organismsDiffer>
    <experiments>3</experiments>
</comment>
<comment type="subcellular location">
    <subcellularLocation>
        <location evidence="3">Nucleus</location>
    </subcellularLocation>
</comment>
<comment type="similarity">
    <text evidence="3">Belongs to the krueppel C2H2-type zinc-finger protein family.</text>
</comment>
<comment type="sequence caution" evidence="3">
    <conflict type="erroneous initiation">
        <sequence resource="EMBL-CDS" id="BAB13385"/>
    </conflict>
</comment>
<name>ZFP14_HUMAN</name>
<protein>
    <recommendedName>
        <fullName>Zinc finger protein 14 homolog</fullName>
        <shortName>Zfp-14</shortName>
    </recommendedName>
    <alternativeName>
        <fullName>Zinc finger protein 531</fullName>
    </alternativeName>
</protein>
<gene>
    <name type="primary">ZFP14</name>
    <name type="synonym">KIAA1559</name>
    <name type="synonym">ZNF531</name>
</gene>
<proteinExistence type="evidence at protein level"/>